<keyword id="KW-0963">Cytoplasm</keyword>
<keyword id="KW-0255">Endonuclease</keyword>
<keyword id="KW-0378">Hydrolase</keyword>
<keyword id="KW-0460">Magnesium</keyword>
<keyword id="KW-0479">Metal-binding</keyword>
<keyword id="KW-0507">mRNA processing</keyword>
<keyword id="KW-0540">Nuclease</keyword>
<keyword id="KW-0694">RNA-binding</keyword>
<keyword id="KW-0698">rRNA processing</keyword>
<keyword id="KW-0699">rRNA-binding</keyword>
<keyword id="KW-0819">tRNA processing</keyword>
<dbReference type="EC" id="3.1.26.3" evidence="1"/>
<dbReference type="EMBL" id="CP000947">
    <property type="protein sequence ID" value="ACA32510.1"/>
    <property type="molecule type" value="Genomic_DNA"/>
</dbReference>
<dbReference type="RefSeq" id="WP_012341647.1">
    <property type="nucleotide sequence ID" value="NC_010519.1"/>
</dbReference>
<dbReference type="SMR" id="B0USS1"/>
<dbReference type="STRING" id="228400.HSM_0838"/>
<dbReference type="GeneID" id="31487125"/>
<dbReference type="KEGG" id="hsm:HSM_0838"/>
<dbReference type="HOGENOM" id="CLU_000907_1_1_6"/>
<dbReference type="GO" id="GO:0005737">
    <property type="term" value="C:cytoplasm"/>
    <property type="evidence" value="ECO:0007669"/>
    <property type="project" value="UniProtKB-SubCell"/>
</dbReference>
<dbReference type="GO" id="GO:0003725">
    <property type="term" value="F:double-stranded RNA binding"/>
    <property type="evidence" value="ECO:0007669"/>
    <property type="project" value="TreeGrafter"/>
</dbReference>
<dbReference type="GO" id="GO:0046872">
    <property type="term" value="F:metal ion binding"/>
    <property type="evidence" value="ECO:0007669"/>
    <property type="project" value="UniProtKB-KW"/>
</dbReference>
<dbReference type="GO" id="GO:0004525">
    <property type="term" value="F:ribonuclease III activity"/>
    <property type="evidence" value="ECO:0007669"/>
    <property type="project" value="UniProtKB-UniRule"/>
</dbReference>
<dbReference type="GO" id="GO:0019843">
    <property type="term" value="F:rRNA binding"/>
    <property type="evidence" value="ECO:0007669"/>
    <property type="project" value="UniProtKB-KW"/>
</dbReference>
<dbReference type="GO" id="GO:0006397">
    <property type="term" value="P:mRNA processing"/>
    <property type="evidence" value="ECO:0007669"/>
    <property type="project" value="UniProtKB-UniRule"/>
</dbReference>
<dbReference type="GO" id="GO:0010468">
    <property type="term" value="P:regulation of gene expression"/>
    <property type="evidence" value="ECO:0007669"/>
    <property type="project" value="TreeGrafter"/>
</dbReference>
<dbReference type="GO" id="GO:0006364">
    <property type="term" value="P:rRNA processing"/>
    <property type="evidence" value="ECO:0007669"/>
    <property type="project" value="UniProtKB-UniRule"/>
</dbReference>
<dbReference type="GO" id="GO:0008033">
    <property type="term" value="P:tRNA processing"/>
    <property type="evidence" value="ECO:0007669"/>
    <property type="project" value="UniProtKB-KW"/>
</dbReference>
<dbReference type="CDD" id="cd10845">
    <property type="entry name" value="DSRM_RNAse_III_family"/>
    <property type="match status" value="1"/>
</dbReference>
<dbReference type="CDD" id="cd00593">
    <property type="entry name" value="RIBOc"/>
    <property type="match status" value="1"/>
</dbReference>
<dbReference type="FunFam" id="1.10.1520.10:FF:000001">
    <property type="entry name" value="Ribonuclease 3"/>
    <property type="match status" value="1"/>
</dbReference>
<dbReference type="FunFam" id="3.30.160.20:FF:000003">
    <property type="entry name" value="Ribonuclease 3"/>
    <property type="match status" value="1"/>
</dbReference>
<dbReference type="Gene3D" id="3.30.160.20">
    <property type="match status" value="1"/>
</dbReference>
<dbReference type="Gene3D" id="1.10.1520.10">
    <property type="entry name" value="Ribonuclease III domain"/>
    <property type="match status" value="1"/>
</dbReference>
<dbReference type="HAMAP" id="MF_00104">
    <property type="entry name" value="RNase_III"/>
    <property type="match status" value="1"/>
</dbReference>
<dbReference type="InterPro" id="IPR014720">
    <property type="entry name" value="dsRBD_dom"/>
</dbReference>
<dbReference type="InterPro" id="IPR011907">
    <property type="entry name" value="RNase_III"/>
</dbReference>
<dbReference type="InterPro" id="IPR000999">
    <property type="entry name" value="RNase_III_dom"/>
</dbReference>
<dbReference type="InterPro" id="IPR036389">
    <property type="entry name" value="RNase_III_sf"/>
</dbReference>
<dbReference type="NCBIfam" id="TIGR02191">
    <property type="entry name" value="RNaseIII"/>
    <property type="match status" value="1"/>
</dbReference>
<dbReference type="PANTHER" id="PTHR11207:SF0">
    <property type="entry name" value="RIBONUCLEASE 3"/>
    <property type="match status" value="1"/>
</dbReference>
<dbReference type="PANTHER" id="PTHR11207">
    <property type="entry name" value="RIBONUCLEASE III"/>
    <property type="match status" value="1"/>
</dbReference>
<dbReference type="Pfam" id="PF00035">
    <property type="entry name" value="dsrm"/>
    <property type="match status" value="1"/>
</dbReference>
<dbReference type="Pfam" id="PF14622">
    <property type="entry name" value="Ribonucleas_3_3"/>
    <property type="match status" value="1"/>
</dbReference>
<dbReference type="SMART" id="SM00358">
    <property type="entry name" value="DSRM"/>
    <property type="match status" value="1"/>
</dbReference>
<dbReference type="SMART" id="SM00535">
    <property type="entry name" value="RIBOc"/>
    <property type="match status" value="1"/>
</dbReference>
<dbReference type="SUPFAM" id="SSF54768">
    <property type="entry name" value="dsRNA-binding domain-like"/>
    <property type="match status" value="1"/>
</dbReference>
<dbReference type="SUPFAM" id="SSF69065">
    <property type="entry name" value="RNase III domain-like"/>
    <property type="match status" value="1"/>
</dbReference>
<dbReference type="PROSITE" id="PS50137">
    <property type="entry name" value="DS_RBD"/>
    <property type="match status" value="1"/>
</dbReference>
<dbReference type="PROSITE" id="PS00517">
    <property type="entry name" value="RNASE_3_1"/>
    <property type="match status" value="1"/>
</dbReference>
<dbReference type="PROSITE" id="PS50142">
    <property type="entry name" value="RNASE_3_2"/>
    <property type="match status" value="1"/>
</dbReference>
<feature type="chain" id="PRO_1000075763" description="Ribonuclease 3">
    <location>
        <begin position="1"/>
        <end position="223"/>
    </location>
</feature>
<feature type="domain" description="RNase III" evidence="1">
    <location>
        <begin position="3"/>
        <end position="125"/>
    </location>
</feature>
<feature type="domain" description="DRBM" evidence="1">
    <location>
        <begin position="152"/>
        <end position="222"/>
    </location>
</feature>
<feature type="active site" evidence="1">
    <location>
        <position position="42"/>
    </location>
</feature>
<feature type="active site" evidence="1">
    <location>
        <position position="114"/>
    </location>
</feature>
<feature type="binding site" evidence="1">
    <location>
        <position position="38"/>
    </location>
    <ligand>
        <name>Mg(2+)</name>
        <dbReference type="ChEBI" id="CHEBI:18420"/>
    </ligand>
</feature>
<feature type="binding site" evidence="1">
    <location>
        <position position="111"/>
    </location>
    <ligand>
        <name>Mg(2+)</name>
        <dbReference type="ChEBI" id="CHEBI:18420"/>
    </ligand>
</feature>
<feature type="binding site" evidence="1">
    <location>
        <position position="114"/>
    </location>
    <ligand>
        <name>Mg(2+)</name>
        <dbReference type="ChEBI" id="CHEBI:18420"/>
    </ligand>
</feature>
<name>RNC_HISS2</name>
<organism>
    <name type="scientific">Histophilus somni (strain 2336)</name>
    <name type="common">Haemophilus somnus</name>
    <dbReference type="NCBI Taxonomy" id="228400"/>
    <lineage>
        <taxon>Bacteria</taxon>
        <taxon>Pseudomonadati</taxon>
        <taxon>Pseudomonadota</taxon>
        <taxon>Gammaproteobacteria</taxon>
        <taxon>Pasteurellales</taxon>
        <taxon>Pasteurellaceae</taxon>
        <taxon>Histophilus</taxon>
    </lineage>
</organism>
<sequence>MQLEKLQKKLGHQFTNLDYLKQALTHRSAAAFNNERLEFLGDSILNFAIGKALYEKFPKSNEGELSRMRATLVKEQTLAVVARQVELGDYLKLGAGELKSGGFRRESILSDCVEALIAAIYLDAGIDVALARVYQWYQELLEQIKPGEAQKDPKTRLQEFLQGHRLKLPEYEVIEIKGDAHNQSFRVSCKVETLTDVVFGQGTSRRKAEQHAAQQAIEKLKIK</sequence>
<evidence type="ECO:0000255" key="1">
    <source>
        <dbReference type="HAMAP-Rule" id="MF_00104"/>
    </source>
</evidence>
<protein>
    <recommendedName>
        <fullName evidence="1">Ribonuclease 3</fullName>
        <ecNumber evidence="1">3.1.26.3</ecNumber>
    </recommendedName>
    <alternativeName>
        <fullName evidence="1">Ribonuclease III</fullName>
        <shortName evidence="1">RNase III</shortName>
    </alternativeName>
</protein>
<accession>B0USS1</accession>
<gene>
    <name evidence="1" type="primary">rnc</name>
    <name type="ordered locus">HSM_0838</name>
</gene>
<comment type="function">
    <text evidence="1">Digests double-stranded RNA. Involved in the processing of primary rRNA transcript to yield the immediate precursors to the large and small rRNAs (23S and 16S). Processes some mRNAs, and tRNAs when they are encoded in the rRNA operon. Processes pre-crRNA and tracrRNA of type II CRISPR loci if present in the organism.</text>
</comment>
<comment type="catalytic activity">
    <reaction evidence="1">
        <text>Endonucleolytic cleavage to 5'-phosphomonoester.</text>
        <dbReference type="EC" id="3.1.26.3"/>
    </reaction>
</comment>
<comment type="cofactor">
    <cofactor evidence="1">
        <name>Mg(2+)</name>
        <dbReference type="ChEBI" id="CHEBI:18420"/>
    </cofactor>
</comment>
<comment type="subunit">
    <text evidence="1">Homodimer.</text>
</comment>
<comment type="subcellular location">
    <subcellularLocation>
        <location evidence="1">Cytoplasm</location>
    </subcellularLocation>
</comment>
<comment type="similarity">
    <text evidence="1">Belongs to the ribonuclease III family.</text>
</comment>
<proteinExistence type="inferred from homology"/>
<reference key="1">
    <citation type="submission" date="2008-02" db="EMBL/GenBank/DDBJ databases">
        <title>Complete sequence of Haemophilus somnus 2336.</title>
        <authorList>
            <consortium name="US DOE Joint Genome Institute"/>
            <person name="Siddaramappa S."/>
            <person name="Duncan A.J."/>
            <person name="Challacombe J.F."/>
            <person name="Rainey D."/>
            <person name="Gillaspy A.F."/>
            <person name="Carson M."/>
            <person name="Gipson J."/>
            <person name="Gipson M."/>
            <person name="Bruce D."/>
            <person name="Detter J.C."/>
            <person name="Han C.S."/>
            <person name="Land M."/>
            <person name="Tapia R."/>
            <person name="Thompson L.S."/>
            <person name="Orvis J."/>
            <person name="Zaitshik J."/>
            <person name="Barnes G."/>
            <person name="Brettin T.S."/>
            <person name="Dyer D.W."/>
            <person name="Inzana T.J."/>
        </authorList>
    </citation>
    <scope>NUCLEOTIDE SEQUENCE [LARGE SCALE GENOMIC DNA]</scope>
    <source>
        <strain>2336</strain>
    </source>
</reference>